<keyword id="KW-0106">Calcium</keyword>
<keyword id="KW-0903">Direct protein sequencing</keyword>
<keyword id="KW-0349">Heme</keyword>
<keyword id="KW-0376">Hydrogen peroxide</keyword>
<keyword id="KW-0408">Iron</keyword>
<keyword id="KW-0479">Metal-binding</keyword>
<keyword id="KW-0560">Oxidoreductase</keyword>
<keyword id="KW-0575">Peroxidase</keyword>
<keyword id="KW-0964">Secreted</keyword>
<reference evidence="3" key="1">
    <citation type="submission" date="2008-07" db="UniProtKB">
        <authorList>
            <person name="Sabater Jara A.B."/>
            <person name="Almagro L."/>
            <person name="Pedreno M.A."/>
        </authorList>
    </citation>
    <scope>PROTEIN SEQUENCE</scope>
</reference>
<sequence>GFEVIAQAKLGGQTYTVALGREMVALAGAHTVGFARMGNLPPSAGAQLEIR</sequence>
<accession>P85999</accession>
<comment type="function">
    <text evidence="3">Removal of H(2)O(2), oxidation of toxic reductants, biosynthesis and degradation of lignin, suberization, auxin catabolism, response to environmental stresses such as wounding, pathogen attack and oxidative stress. These functions might be dependent on each isozyme/isoform in each plant tissue.</text>
</comment>
<comment type="function">
    <text evidence="1">Suggested to catalyze the deposition of the aromatic residues of suberin on the cell wall and thus play a role in cell-suberization.</text>
</comment>
<comment type="catalytic activity">
    <reaction>
        <text>2 a phenolic donor + H2O2 = 2 a phenolic radical donor + 2 H2O</text>
        <dbReference type="Rhea" id="RHEA:56136"/>
        <dbReference type="ChEBI" id="CHEBI:15377"/>
        <dbReference type="ChEBI" id="CHEBI:16240"/>
        <dbReference type="ChEBI" id="CHEBI:139520"/>
        <dbReference type="ChEBI" id="CHEBI:139521"/>
        <dbReference type="EC" id="1.11.1.7"/>
    </reaction>
</comment>
<comment type="cofactor">
    <cofactor evidence="1 2">
        <name>heme b</name>
        <dbReference type="ChEBI" id="CHEBI:60344"/>
    </cofactor>
    <text evidence="1 2">Binds 1 heme b (iron(II)-protoporphyrin IX) group per subunit.</text>
</comment>
<comment type="cofactor">
    <cofactor evidence="1 2">
        <name>Ca(2+)</name>
        <dbReference type="ChEBI" id="CHEBI:29108"/>
    </cofactor>
    <text evidence="1 2">Binds 2 calcium ions per subunit.</text>
</comment>
<comment type="subcellular location">
    <subcellularLocation>
        <location evidence="1 2">Secreted</location>
    </subcellularLocation>
</comment>
<comment type="similarity">
    <text evidence="2">Belongs to the peroxidase family. Classical plant (class III) peroxidase subfamily.</text>
</comment>
<evidence type="ECO:0000250" key="1">
    <source>
        <dbReference type="UniProtKB" id="P15004"/>
    </source>
</evidence>
<evidence type="ECO:0000255" key="2">
    <source>
        <dbReference type="PROSITE-ProRule" id="PRU00297"/>
    </source>
</evidence>
<evidence type="ECO:0000305" key="3"/>
<proteinExistence type="evidence at protein level"/>
<dbReference type="EC" id="1.11.1.7"/>
<dbReference type="GO" id="GO:0005576">
    <property type="term" value="C:extracellular region"/>
    <property type="evidence" value="ECO:0007669"/>
    <property type="project" value="UniProtKB-SubCell"/>
</dbReference>
<dbReference type="GO" id="GO:0020037">
    <property type="term" value="F:heme binding"/>
    <property type="evidence" value="ECO:0007669"/>
    <property type="project" value="InterPro"/>
</dbReference>
<dbReference type="GO" id="GO:0140825">
    <property type="term" value="F:lactoperoxidase activity"/>
    <property type="evidence" value="ECO:0007669"/>
    <property type="project" value="UniProtKB-EC"/>
</dbReference>
<dbReference type="GO" id="GO:0046872">
    <property type="term" value="F:metal ion binding"/>
    <property type="evidence" value="ECO:0007669"/>
    <property type="project" value="UniProtKB-KW"/>
</dbReference>
<dbReference type="GO" id="GO:0042744">
    <property type="term" value="P:hydrogen peroxide catabolic process"/>
    <property type="evidence" value="ECO:0007669"/>
    <property type="project" value="UniProtKB-KW"/>
</dbReference>
<dbReference type="GO" id="GO:0006979">
    <property type="term" value="P:response to oxidative stress"/>
    <property type="evidence" value="ECO:0007669"/>
    <property type="project" value="InterPro"/>
</dbReference>
<dbReference type="InterPro" id="IPR010255">
    <property type="entry name" value="Haem_peroxidase_sf"/>
</dbReference>
<dbReference type="SUPFAM" id="SSF48113">
    <property type="entry name" value="Heme-dependent peroxidases"/>
    <property type="match status" value="1"/>
</dbReference>
<dbReference type="PROSITE" id="PS00435">
    <property type="entry name" value="PEROXIDASE_1"/>
    <property type="match status" value="1"/>
</dbReference>
<feature type="chain" id="PRO_0000363728" description="Suberization-associated anionic peroxidase 1">
    <location>
        <begin position="1" status="less than"/>
        <end position="51" status="greater than"/>
    </location>
</feature>
<feature type="binding site" description="axial binding residue" evidence="1 2">
    <location>
        <position position="30"/>
    </location>
    <ligand>
        <name>heme</name>
        <dbReference type="ChEBI" id="CHEBI:30413"/>
    </ligand>
    <ligandPart>
        <name>Fe</name>
        <dbReference type="ChEBI" id="CHEBI:18248"/>
    </ligandPart>
</feature>
<feature type="binding site" evidence="1 2">
    <location>
        <position position="31"/>
    </location>
    <ligand>
        <name>Ca(2+)</name>
        <dbReference type="ChEBI" id="CHEBI:29108"/>
        <label>2</label>
    </ligand>
</feature>
<feature type="unsure residue" description="F or M">
    <location>
        <position position="2"/>
    </location>
</feature>
<feature type="unsure residue" description="I or L">
    <location>
        <position position="5"/>
    </location>
</feature>
<feature type="unsure residue" description="Q or K">
    <location>
        <position position="7"/>
    </location>
</feature>
<feature type="unsure residue" description="K or Q">
    <location>
        <position position="9"/>
    </location>
</feature>
<feature type="unsure residue" description="L or I">
    <location>
        <position position="10"/>
    </location>
</feature>
<feature type="unsure residue" description="Q or K">
    <location>
        <position position="13"/>
    </location>
</feature>
<feature type="unsure residue" description="L or I">
    <location>
        <position position="19"/>
    </location>
</feature>
<feature type="unsure residue" description="M or F">
    <location>
        <position position="23"/>
    </location>
</feature>
<feature type="unsure residue" description="L or I">
    <location>
        <position position="26"/>
    </location>
</feature>
<feature type="unsure residue" description="F or M">
    <location>
        <position position="34"/>
    </location>
</feature>
<feature type="unsure residue" description="M or F">
    <location>
        <position position="37"/>
    </location>
</feature>
<feature type="unsure residue" description="L or I">
    <location>
        <position position="40"/>
    </location>
</feature>
<feature type="unsure residue" description="Q or K">
    <location>
        <position position="47"/>
    </location>
</feature>
<feature type="unsure residue" description="L or I">
    <location>
        <position position="48"/>
    </location>
</feature>
<feature type="unsure residue" description="I or L">
    <location>
        <position position="50"/>
    </location>
</feature>
<feature type="non-consecutive residues" evidence="3">
    <location>
        <begin position="9"/>
        <end position="10"/>
    </location>
</feature>
<feature type="non-consecutive residues" evidence="3">
    <location>
        <begin position="21"/>
        <end position="22"/>
    </location>
</feature>
<feature type="non-consecutive residues" evidence="3">
    <location>
        <begin position="36"/>
        <end position="37"/>
    </location>
</feature>
<feature type="non-terminal residue">
    <location>
        <position position="1"/>
    </location>
</feature>
<feature type="non-terminal residue">
    <location>
        <position position="51"/>
    </location>
</feature>
<name>PER1_CAPAN</name>
<protein>
    <recommendedName>
        <fullName evidence="1">Suberization-associated anionic peroxidase 1</fullName>
        <ecNumber>1.11.1.7</ecNumber>
    </recommendedName>
</protein>
<organism>
    <name type="scientific">Capsicum annuum</name>
    <name type="common">Capsicum pepper</name>
    <dbReference type="NCBI Taxonomy" id="4072"/>
    <lineage>
        <taxon>Eukaryota</taxon>
        <taxon>Viridiplantae</taxon>
        <taxon>Streptophyta</taxon>
        <taxon>Embryophyta</taxon>
        <taxon>Tracheophyta</taxon>
        <taxon>Spermatophyta</taxon>
        <taxon>Magnoliopsida</taxon>
        <taxon>eudicotyledons</taxon>
        <taxon>Gunneridae</taxon>
        <taxon>Pentapetalae</taxon>
        <taxon>asterids</taxon>
        <taxon>lamiids</taxon>
        <taxon>Solanales</taxon>
        <taxon>Solanaceae</taxon>
        <taxon>Solanoideae</taxon>
        <taxon>Capsiceae</taxon>
        <taxon>Capsicum</taxon>
    </lineage>
</organism>